<gene>
    <name type="primary">fma1</name>
    <name type="ORF">SPBC3E7.10</name>
</gene>
<proteinExistence type="evidence at protein level"/>
<feature type="chain" id="PRO_0000148972" description="Methionine aminopeptidase 1">
    <location>
        <begin position="1"/>
        <end position="379"/>
    </location>
</feature>
<feature type="zinc finger region" description="C6H2-type" evidence="2">
    <location>
        <begin position="7"/>
        <end position="60"/>
    </location>
</feature>
<feature type="binding site" evidence="1">
    <location>
        <position position="10"/>
    </location>
    <ligand>
        <name>Zn(2+)</name>
        <dbReference type="ChEBI" id="CHEBI:29105"/>
        <label>1</label>
    </ligand>
</feature>
<feature type="binding site" evidence="1">
    <location>
        <position position="15"/>
    </location>
    <ligand>
        <name>Zn(2+)</name>
        <dbReference type="ChEBI" id="CHEBI:29105"/>
        <label>1</label>
    </ligand>
</feature>
<feature type="binding site" evidence="1">
    <location>
        <position position="24"/>
    </location>
    <ligand>
        <name>Zn(2+)</name>
        <dbReference type="ChEBI" id="CHEBI:29105"/>
        <label>2</label>
    </ligand>
</feature>
<feature type="binding site" evidence="1">
    <location>
        <position position="27"/>
    </location>
    <ligand>
        <name>Zn(2+)</name>
        <dbReference type="ChEBI" id="CHEBI:29105"/>
        <label>2</label>
    </ligand>
</feature>
<feature type="binding site" evidence="1">
    <location>
        <position position="37"/>
    </location>
    <ligand>
        <name>Zn(2+)</name>
        <dbReference type="ChEBI" id="CHEBI:29105"/>
        <label>1</label>
    </ligand>
</feature>
<feature type="binding site" evidence="1">
    <location>
        <position position="41"/>
    </location>
    <ligand>
        <name>Zn(2+)</name>
        <dbReference type="ChEBI" id="CHEBI:29105"/>
        <label>1</label>
    </ligand>
</feature>
<feature type="binding site" evidence="1">
    <location>
        <position position="49"/>
    </location>
    <ligand>
        <name>Zn(2+)</name>
        <dbReference type="ChEBI" id="CHEBI:29105"/>
        <label>2</label>
    </ligand>
</feature>
<feature type="binding site" evidence="1">
    <location>
        <position position="53"/>
    </location>
    <ligand>
        <name>Zn(2+)</name>
        <dbReference type="ChEBI" id="CHEBI:29105"/>
        <label>2</label>
    </ligand>
</feature>
<feature type="binding site" evidence="1">
    <location>
        <position position="192"/>
    </location>
    <ligand>
        <name>a protein</name>
        <dbReference type="ChEBI" id="CHEBI:16541"/>
    </ligand>
    <ligandPart>
        <name>N-terminal L-methionine residue</name>
        <dbReference type="ChEBI" id="CHEBI:64731"/>
    </ligandPart>
</feature>
<feature type="binding site" evidence="1">
    <location>
        <position position="209"/>
    </location>
    <ligand>
        <name>Zn(2+)</name>
        <dbReference type="ChEBI" id="CHEBI:29105"/>
        <label>3</label>
    </ligand>
</feature>
<feature type="binding site" evidence="1">
    <location>
        <position position="220"/>
    </location>
    <ligand>
        <name>Zn(2+)</name>
        <dbReference type="ChEBI" id="CHEBI:29105"/>
        <label>3</label>
    </ligand>
</feature>
<feature type="binding site" evidence="1">
    <location>
        <position position="220"/>
    </location>
    <ligand>
        <name>Zn(2+)</name>
        <dbReference type="ChEBI" id="CHEBI:29105"/>
        <label>4</label>
        <note>catalytic</note>
    </ligand>
</feature>
<feature type="binding site" evidence="1">
    <location>
        <position position="289"/>
    </location>
    <ligand>
        <name>Zn(2+)</name>
        <dbReference type="ChEBI" id="CHEBI:29105"/>
        <label>4</label>
        <note>catalytic</note>
    </ligand>
</feature>
<feature type="binding site" evidence="1">
    <location>
        <position position="296"/>
    </location>
    <ligand>
        <name>a protein</name>
        <dbReference type="ChEBI" id="CHEBI:16541"/>
    </ligand>
    <ligandPart>
        <name>N-terminal L-methionine residue</name>
        <dbReference type="ChEBI" id="CHEBI:64731"/>
    </ligandPart>
</feature>
<feature type="binding site" evidence="1">
    <location>
        <position position="322"/>
    </location>
    <ligand>
        <name>Zn(2+)</name>
        <dbReference type="ChEBI" id="CHEBI:29105"/>
        <label>4</label>
        <note>catalytic</note>
    </ligand>
</feature>
<feature type="binding site" evidence="1">
    <location>
        <position position="353"/>
    </location>
    <ligand>
        <name>Zn(2+)</name>
        <dbReference type="ChEBI" id="CHEBI:29105"/>
        <label>3</label>
    </ligand>
</feature>
<feature type="binding site" evidence="1">
    <location>
        <position position="353"/>
    </location>
    <ligand>
        <name>Zn(2+)</name>
        <dbReference type="ChEBI" id="CHEBI:29105"/>
        <label>4</label>
        <note>catalytic</note>
    </ligand>
</feature>
<feature type="modified residue" description="Phosphoserine" evidence="4">
    <location>
        <position position="373"/>
    </location>
</feature>
<sequence>MATEIAKHICCGIDCNNEADRLQCPKCLNDGVKSYFCGQECFRNSWNIHKHLHRPPNVEKREDGTYNPFPKFHFAGSLKPVYPLSPIRKVPPHIKRPDYAKTGVSRSEQIEGRSFKLKRLTPKEQEGMRKVCRLGREVLDAAAAAVRPGTTTDELDSIVHNACIERDCFPSTLNYYAFPKSVCTSVNEIICHGIPDQRPLEDGDIVNIDVSLYHNGFHGDLNETYYVGDKAKANPDLVCLVENTRIALDKAIAAVKPGVLFQEFGNIIEKHTNSITEKQISVVRTYCGHGINQLFHCSPSIPHYSHNKAPGIARPGMTFTIEPMLTLGPARDITWPDDWTSSTASGRCSAQFEHTLLVTETGCEVLTARLPNSPGGPLK</sequence>
<comment type="function">
    <text evidence="1">Cotranslationally removes the N-terminal methionine from nascent proteins. The N-terminal methionine is often cleaved when the second residue in the primary sequence is small and uncharged (Met-Ala-, Cys, Gly, Pro, Ser, Thr, or Val).</text>
</comment>
<comment type="catalytic activity">
    <reaction evidence="1">
        <text>Release of N-terminal amino acids, preferentially methionine, from peptides and arylamides.</text>
        <dbReference type="EC" id="3.4.11.18"/>
    </reaction>
</comment>
<comment type="cofactor">
    <cofactor evidence="1">
        <name>Zn(2+)</name>
        <dbReference type="ChEBI" id="CHEBI:29105"/>
    </cofactor>
    <cofactor evidence="1">
        <name>Co(2+)</name>
        <dbReference type="ChEBI" id="CHEBI:48828"/>
    </cofactor>
    <cofactor evidence="1">
        <name>Mn(2+)</name>
        <dbReference type="ChEBI" id="CHEBI:29035"/>
    </cofactor>
    <cofactor evidence="1">
        <name>Fe(2+)</name>
        <dbReference type="ChEBI" id="CHEBI:29033"/>
    </cofactor>
    <text evidence="1">Binds 2 divalent metal cations per subunit. Has a high-affinity and a low affinity metal-binding site. The true nature of the physiological cofactor is under debate. The enzyme is active with zinc, cobalt, manganese or divalent iron ions. Has high activity with zinc; zinc cofactor is transferred into the active site region by the zng1 zinc chaperone.</text>
</comment>
<comment type="subunit">
    <text evidence="1">Associates with the 60S ribosomal subunit of the 80S translational complex.</text>
</comment>
<comment type="subcellular location">
    <subcellularLocation>
        <location evidence="1 3">Cytoplasm</location>
    </subcellularLocation>
    <subcellularLocation>
        <location evidence="3">Nucleus</location>
        <location evidence="3">Nucleolus</location>
    </subcellularLocation>
</comment>
<comment type="similarity">
    <text evidence="1">Belongs to the peptidase M24A family. Methionine aminopeptidase type 1 subfamily.</text>
</comment>
<organism>
    <name type="scientific">Schizosaccharomyces pombe (strain 972 / ATCC 24843)</name>
    <name type="common">Fission yeast</name>
    <dbReference type="NCBI Taxonomy" id="284812"/>
    <lineage>
        <taxon>Eukaryota</taxon>
        <taxon>Fungi</taxon>
        <taxon>Dikarya</taxon>
        <taxon>Ascomycota</taxon>
        <taxon>Taphrinomycotina</taxon>
        <taxon>Schizosaccharomycetes</taxon>
        <taxon>Schizosaccharomycetales</taxon>
        <taxon>Schizosaccharomycetaceae</taxon>
        <taxon>Schizosaccharomyces</taxon>
    </lineage>
</organism>
<accession>O59730</accession>
<evidence type="ECO:0000255" key="1">
    <source>
        <dbReference type="HAMAP-Rule" id="MF_03174"/>
    </source>
</evidence>
<evidence type="ECO:0000255" key="2">
    <source>
        <dbReference type="PROSITE-ProRule" id="PRU01357"/>
    </source>
</evidence>
<evidence type="ECO:0000269" key="3">
    <source>
    </source>
</evidence>
<evidence type="ECO:0000269" key="4">
    <source>
    </source>
</evidence>
<name>MAP1_SCHPO</name>
<keyword id="KW-0031">Aminopeptidase</keyword>
<keyword id="KW-0963">Cytoplasm</keyword>
<keyword id="KW-0378">Hydrolase</keyword>
<keyword id="KW-0479">Metal-binding</keyword>
<keyword id="KW-0539">Nucleus</keyword>
<keyword id="KW-0597">Phosphoprotein</keyword>
<keyword id="KW-0645">Protease</keyword>
<keyword id="KW-1185">Reference proteome</keyword>
<keyword id="KW-0862">Zinc</keyword>
<keyword id="KW-0863">Zinc-finger</keyword>
<protein>
    <recommendedName>
        <fullName evidence="1">Methionine aminopeptidase 1</fullName>
        <shortName evidence="1">MAP 1</shortName>
        <shortName evidence="1">MetAP 1</shortName>
        <ecNumber evidence="1">3.4.11.18</ecNumber>
    </recommendedName>
    <alternativeName>
        <fullName evidence="1">Peptidase M 1</fullName>
    </alternativeName>
</protein>
<reference key="1">
    <citation type="journal article" date="2002" name="Nature">
        <title>The genome sequence of Schizosaccharomyces pombe.</title>
        <authorList>
            <person name="Wood V."/>
            <person name="Gwilliam R."/>
            <person name="Rajandream M.A."/>
            <person name="Lyne M.H."/>
            <person name="Lyne R."/>
            <person name="Stewart A."/>
            <person name="Sgouros J.G."/>
            <person name="Peat N."/>
            <person name="Hayles J."/>
            <person name="Baker S.G."/>
            <person name="Basham D."/>
            <person name="Bowman S."/>
            <person name="Brooks K."/>
            <person name="Brown D."/>
            <person name="Brown S."/>
            <person name="Chillingworth T."/>
            <person name="Churcher C.M."/>
            <person name="Collins M."/>
            <person name="Connor R."/>
            <person name="Cronin A."/>
            <person name="Davis P."/>
            <person name="Feltwell T."/>
            <person name="Fraser A."/>
            <person name="Gentles S."/>
            <person name="Goble A."/>
            <person name="Hamlin N."/>
            <person name="Harris D.E."/>
            <person name="Hidalgo J."/>
            <person name="Hodgson G."/>
            <person name="Holroyd S."/>
            <person name="Hornsby T."/>
            <person name="Howarth S."/>
            <person name="Huckle E.J."/>
            <person name="Hunt S."/>
            <person name="Jagels K."/>
            <person name="James K.D."/>
            <person name="Jones L."/>
            <person name="Jones M."/>
            <person name="Leather S."/>
            <person name="McDonald S."/>
            <person name="McLean J."/>
            <person name="Mooney P."/>
            <person name="Moule S."/>
            <person name="Mungall K.L."/>
            <person name="Murphy L.D."/>
            <person name="Niblett D."/>
            <person name="Odell C."/>
            <person name="Oliver K."/>
            <person name="O'Neil S."/>
            <person name="Pearson D."/>
            <person name="Quail M.A."/>
            <person name="Rabbinowitsch E."/>
            <person name="Rutherford K.M."/>
            <person name="Rutter S."/>
            <person name="Saunders D."/>
            <person name="Seeger K."/>
            <person name="Sharp S."/>
            <person name="Skelton J."/>
            <person name="Simmonds M.N."/>
            <person name="Squares R."/>
            <person name="Squares S."/>
            <person name="Stevens K."/>
            <person name="Taylor K."/>
            <person name="Taylor R.G."/>
            <person name="Tivey A."/>
            <person name="Walsh S.V."/>
            <person name="Warren T."/>
            <person name="Whitehead S."/>
            <person name="Woodward J.R."/>
            <person name="Volckaert G."/>
            <person name="Aert R."/>
            <person name="Robben J."/>
            <person name="Grymonprez B."/>
            <person name="Weltjens I."/>
            <person name="Vanstreels E."/>
            <person name="Rieger M."/>
            <person name="Schaefer M."/>
            <person name="Mueller-Auer S."/>
            <person name="Gabel C."/>
            <person name="Fuchs M."/>
            <person name="Duesterhoeft A."/>
            <person name="Fritzc C."/>
            <person name="Holzer E."/>
            <person name="Moestl D."/>
            <person name="Hilbert H."/>
            <person name="Borzym K."/>
            <person name="Langer I."/>
            <person name="Beck A."/>
            <person name="Lehrach H."/>
            <person name="Reinhardt R."/>
            <person name="Pohl T.M."/>
            <person name="Eger P."/>
            <person name="Zimmermann W."/>
            <person name="Wedler H."/>
            <person name="Wambutt R."/>
            <person name="Purnelle B."/>
            <person name="Goffeau A."/>
            <person name="Cadieu E."/>
            <person name="Dreano S."/>
            <person name="Gloux S."/>
            <person name="Lelaure V."/>
            <person name="Mottier S."/>
            <person name="Galibert F."/>
            <person name="Aves S.J."/>
            <person name="Xiang Z."/>
            <person name="Hunt C."/>
            <person name="Moore K."/>
            <person name="Hurst S.M."/>
            <person name="Lucas M."/>
            <person name="Rochet M."/>
            <person name="Gaillardin C."/>
            <person name="Tallada V.A."/>
            <person name="Garzon A."/>
            <person name="Thode G."/>
            <person name="Daga R.R."/>
            <person name="Cruzado L."/>
            <person name="Jimenez J."/>
            <person name="Sanchez M."/>
            <person name="del Rey F."/>
            <person name="Benito J."/>
            <person name="Dominguez A."/>
            <person name="Revuelta J.L."/>
            <person name="Moreno S."/>
            <person name="Armstrong J."/>
            <person name="Forsburg S.L."/>
            <person name="Cerutti L."/>
            <person name="Lowe T."/>
            <person name="McCombie W.R."/>
            <person name="Paulsen I."/>
            <person name="Potashkin J."/>
            <person name="Shpakovski G.V."/>
            <person name="Ussery D."/>
            <person name="Barrell B.G."/>
            <person name="Nurse P."/>
        </authorList>
    </citation>
    <scope>NUCLEOTIDE SEQUENCE [LARGE SCALE GENOMIC DNA]</scope>
    <source>
        <strain>972 / ATCC 24843</strain>
    </source>
</reference>
<reference key="2">
    <citation type="journal article" date="2006" name="Nat. Biotechnol.">
        <title>ORFeome cloning and global analysis of protein localization in the fission yeast Schizosaccharomyces pombe.</title>
        <authorList>
            <person name="Matsuyama A."/>
            <person name="Arai R."/>
            <person name="Yashiroda Y."/>
            <person name="Shirai A."/>
            <person name="Kamata A."/>
            <person name="Sekido S."/>
            <person name="Kobayashi Y."/>
            <person name="Hashimoto A."/>
            <person name="Hamamoto M."/>
            <person name="Hiraoka Y."/>
            <person name="Horinouchi S."/>
            <person name="Yoshida M."/>
        </authorList>
    </citation>
    <scope>SUBCELLULAR LOCATION [LARGE SCALE ANALYSIS]</scope>
</reference>
<reference key="3">
    <citation type="journal article" date="2008" name="J. Proteome Res.">
        <title>Phosphoproteome analysis of fission yeast.</title>
        <authorList>
            <person name="Wilson-Grady J.T."/>
            <person name="Villen J."/>
            <person name="Gygi S.P."/>
        </authorList>
    </citation>
    <scope>PHOSPHORYLATION [LARGE SCALE ANALYSIS] AT SER-373</scope>
    <scope>IDENTIFICATION BY MASS SPECTROMETRY</scope>
</reference>
<dbReference type="EC" id="3.4.11.18" evidence="1"/>
<dbReference type="EMBL" id="CU329671">
    <property type="protein sequence ID" value="CAA19013.1"/>
    <property type="molecule type" value="Genomic_DNA"/>
</dbReference>
<dbReference type="PIR" id="T40384">
    <property type="entry name" value="T40384"/>
</dbReference>
<dbReference type="RefSeq" id="NP_596097.1">
    <property type="nucleotide sequence ID" value="NM_001022013.2"/>
</dbReference>
<dbReference type="SMR" id="O59730"/>
<dbReference type="BioGRID" id="277444">
    <property type="interactions" value="18"/>
</dbReference>
<dbReference type="FunCoup" id="O59730">
    <property type="interactions" value="767"/>
</dbReference>
<dbReference type="STRING" id="284812.O59730"/>
<dbReference type="MEROPS" id="M24.017"/>
<dbReference type="iPTMnet" id="O59730"/>
<dbReference type="PaxDb" id="4896-SPBC3E7.10.1"/>
<dbReference type="EnsemblFungi" id="SPBC3E7.10.1">
    <property type="protein sequence ID" value="SPBC3E7.10.1:pep"/>
    <property type="gene ID" value="SPBC3E7.10"/>
</dbReference>
<dbReference type="GeneID" id="2540928"/>
<dbReference type="KEGG" id="spo:2540928"/>
<dbReference type="PomBase" id="SPBC3E7.10">
    <property type="gene designation" value="fma1"/>
</dbReference>
<dbReference type="VEuPathDB" id="FungiDB:SPBC3E7.10"/>
<dbReference type="eggNOG" id="KOG2738">
    <property type="taxonomic scope" value="Eukaryota"/>
</dbReference>
<dbReference type="HOGENOM" id="CLU_015857_2_1_1"/>
<dbReference type="InParanoid" id="O59730"/>
<dbReference type="OMA" id="FYGDHAY"/>
<dbReference type="PhylomeDB" id="O59730"/>
<dbReference type="Reactome" id="R-SPO-2514859">
    <property type="pathway name" value="Inactivation, recovery and regulation of the phototransduction cascade"/>
</dbReference>
<dbReference type="PRO" id="PR:O59730"/>
<dbReference type="Proteomes" id="UP000002485">
    <property type="component" value="Chromosome II"/>
</dbReference>
<dbReference type="GO" id="GO:0005829">
    <property type="term" value="C:cytosol"/>
    <property type="evidence" value="ECO:0007005"/>
    <property type="project" value="PomBase"/>
</dbReference>
<dbReference type="GO" id="GO:0022626">
    <property type="term" value="C:cytosolic ribosome"/>
    <property type="evidence" value="ECO:0007669"/>
    <property type="project" value="UniProtKB-UniRule"/>
</dbReference>
<dbReference type="GO" id="GO:0005730">
    <property type="term" value="C:nucleolus"/>
    <property type="evidence" value="ECO:0007669"/>
    <property type="project" value="UniProtKB-SubCell"/>
</dbReference>
<dbReference type="GO" id="GO:0004239">
    <property type="term" value="F:initiator methionyl aminopeptidase activity"/>
    <property type="evidence" value="ECO:0000303"/>
    <property type="project" value="PomBase"/>
</dbReference>
<dbReference type="GO" id="GO:0070006">
    <property type="term" value="F:metalloaminopeptidase activity"/>
    <property type="evidence" value="ECO:0000318"/>
    <property type="project" value="GO_Central"/>
</dbReference>
<dbReference type="GO" id="GO:0008270">
    <property type="term" value="F:zinc ion binding"/>
    <property type="evidence" value="ECO:0007669"/>
    <property type="project" value="UniProtKB-KW"/>
</dbReference>
<dbReference type="GO" id="GO:0016485">
    <property type="term" value="P:protein processing"/>
    <property type="evidence" value="ECO:0000266"/>
    <property type="project" value="PomBase"/>
</dbReference>
<dbReference type="CDD" id="cd01086">
    <property type="entry name" value="MetAP1"/>
    <property type="match status" value="1"/>
</dbReference>
<dbReference type="FunFam" id="3.90.230.10:FF:000010">
    <property type="entry name" value="Methionine aminopeptidase"/>
    <property type="match status" value="1"/>
</dbReference>
<dbReference type="Gene3D" id="3.90.230.10">
    <property type="entry name" value="Creatinase/methionine aminopeptidase superfamily"/>
    <property type="match status" value="1"/>
</dbReference>
<dbReference type="HAMAP" id="MF_01974">
    <property type="entry name" value="MetAP_1"/>
    <property type="match status" value="1"/>
</dbReference>
<dbReference type="InterPro" id="IPR036005">
    <property type="entry name" value="Creatinase/aminopeptidase-like"/>
</dbReference>
<dbReference type="InterPro" id="IPR000994">
    <property type="entry name" value="Pept_M24"/>
</dbReference>
<dbReference type="InterPro" id="IPR001714">
    <property type="entry name" value="Pept_M24_MAP"/>
</dbReference>
<dbReference type="InterPro" id="IPR002467">
    <property type="entry name" value="Pept_M24A_MAP1"/>
</dbReference>
<dbReference type="InterPro" id="IPR031615">
    <property type="entry name" value="Zfn-C6H2"/>
</dbReference>
<dbReference type="NCBIfam" id="TIGR00500">
    <property type="entry name" value="met_pdase_I"/>
    <property type="match status" value="1"/>
</dbReference>
<dbReference type="PANTHER" id="PTHR43330">
    <property type="entry name" value="METHIONINE AMINOPEPTIDASE"/>
    <property type="match status" value="1"/>
</dbReference>
<dbReference type="PANTHER" id="PTHR43330:SF7">
    <property type="entry name" value="METHIONINE AMINOPEPTIDASE 1"/>
    <property type="match status" value="1"/>
</dbReference>
<dbReference type="Pfam" id="PF00557">
    <property type="entry name" value="Peptidase_M24"/>
    <property type="match status" value="1"/>
</dbReference>
<dbReference type="Pfam" id="PF15801">
    <property type="entry name" value="zf-C6H2"/>
    <property type="match status" value="1"/>
</dbReference>
<dbReference type="PRINTS" id="PR00599">
    <property type="entry name" value="MAPEPTIDASE"/>
</dbReference>
<dbReference type="SUPFAM" id="SSF55920">
    <property type="entry name" value="Creatinase/aminopeptidase"/>
    <property type="match status" value="1"/>
</dbReference>
<dbReference type="PROSITE" id="PS00680">
    <property type="entry name" value="MAP_1"/>
    <property type="match status" value="1"/>
</dbReference>
<dbReference type="PROSITE" id="PS52013">
    <property type="entry name" value="ZF_C6H2"/>
    <property type="match status" value="1"/>
</dbReference>